<name>ASCC3_CHICK</name>
<feature type="chain" id="PRO_0000416917" description="Activating signal cointegrator 1 complex subunit 3">
    <location>
        <begin position="1"/>
        <end position="2211"/>
    </location>
</feature>
<feature type="domain" description="Helicase ATP-binding 1" evidence="2">
    <location>
        <begin position="495"/>
        <end position="678"/>
    </location>
</feature>
<feature type="domain" description="Helicase C-terminal 1" evidence="3">
    <location>
        <begin position="717"/>
        <end position="923"/>
    </location>
</feature>
<feature type="domain" description="SEC63 1">
    <location>
        <begin position="987"/>
        <end position="1296"/>
    </location>
</feature>
<feature type="domain" description="Helicase ATP-binding 2" evidence="2">
    <location>
        <begin position="1345"/>
        <end position="1520"/>
    </location>
</feature>
<feature type="domain" description="Helicase C-terminal 2" evidence="3">
    <location>
        <begin position="1553"/>
        <end position="1760"/>
    </location>
</feature>
<feature type="domain" description="SEC63 2">
    <location>
        <begin position="1821"/>
        <end position="2184"/>
    </location>
</feature>
<feature type="short sequence motif" description="DEVH box">
    <location>
        <begin position="620"/>
        <end position="623"/>
    </location>
</feature>
<feature type="short sequence motif" description="DEIH box">
    <location>
        <begin position="1462"/>
        <end position="1465"/>
    </location>
</feature>
<feature type="binding site" evidence="2">
    <location>
        <begin position="508"/>
        <end position="515"/>
    </location>
    <ligand>
        <name>ATP</name>
        <dbReference type="ChEBI" id="CHEBI:30616"/>
    </ligand>
</feature>
<feature type="binding site" evidence="2">
    <location>
        <begin position="1358"/>
        <end position="1365"/>
    </location>
    <ligand>
        <name>ATP</name>
        <dbReference type="ChEBI" id="CHEBI:30616"/>
    </ligand>
</feature>
<gene>
    <name type="primary">ascc3</name>
</gene>
<accession>F1NTD6</accession>
<keyword id="KW-0067">ATP-binding</keyword>
<keyword id="KW-0963">Cytoplasm</keyword>
<keyword id="KW-0227">DNA damage</keyword>
<keyword id="KW-0234">DNA repair</keyword>
<keyword id="KW-0347">Helicase</keyword>
<keyword id="KW-0378">Hydrolase</keyword>
<keyword id="KW-0413">Isomerase</keyword>
<keyword id="KW-0547">Nucleotide-binding</keyword>
<keyword id="KW-0539">Nucleus</keyword>
<keyword id="KW-1185">Reference proteome</keyword>
<keyword id="KW-0677">Repeat</keyword>
<comment type="function">
    <text evidence="1">3'-5' DNA helicase involved in repair of alkylated DNA. Promotes DNA unwinding to generate single-stranded substrate needed for ALKBH3, enabling ALKBH3 to process alkylated N3-methylcytosine (3mC) within double-stranded regions. Also involved in activation of the ribosome quality control (RQC) pathway, a pathway that degrades nascent peptide chains during problematic translation. Drives the splitting of stalled ribosomes.</text>
</comment>
<comment type="catalytic activity">
    <reaction evidence="1">
        <text>Couples ATP hydrolysis with the unwinding of duplex DNA by translocating in the 3'-5' direction.</text>
        <dbReference type="EC" id="5.6.2.4"/>
    </reaction>
</comment>
<comment type="catalytic activity">
    <reaction evidence="1">
        <text>ATP + H2O = ADP + phosphate + H(+)</text>
        <dbReference type="Rhea" id="RHEA:13065"/>
        <dbReference type="ChEBI" id="CHEBI:15377"/>
        <dbReference type="ChEBI" id="CHEBI:15378"/>
        <dbReference type="ChEBI" id="CHEBI:30616"/>
        <dbReference type="ChEBI" id="CHEBI:43474"/>
        <dbReference type="ChEBI" id="CHEBI:456216"/>
        <dbReference type="EC" id="5.6.2.4"/>
    </reaction>
</comment>
<comment type="subcellular location">
    <subcellularLocation>
        <location evidence="1">Nucleus</location>
    </subcellularLocation>
    <subcellularLocation>
        <location evidence="1">Nucleus speckle</location>
    </subcellularLocation>
    <subcellularLocation>
        <location evidence="1">Cytoplasm</location>
        <location evidence="1">Cytosol</location>
    </subcellularLocation>
    <text evidence="1">Colocalizes with ALKBH3 and ASCC2 in nuclear foci when cells have been exposed to alkylating agents that cause DNA damage.</text>
</comment>
<comment type="similarity">
    <text evidence="4">Belongs to the helicase family.</text>
</comment>
<protein>
    <recommendedName>
        <fullName>Activating signal cointegrator 1 complex subunit 3</fullName>
        <ecNumber evidence="1">5.6.2.4</ecNumber>
    </recommendedName>
</protein>
<organism>
    <name type="scientific">Gallus gallus</name>
    <name type="common">Chicken</name>
    <dbReference type="NCBI Taxonomy" id="9031"/>
    <lineage>
        <taxon>Eukaryota</taxon>
        <taxon>Metazoa</taxon>
        <taxon>Chordata</taxon>
        <taxon>Craniata</taxon>
        <taxon>Vertebrata</taxon>
        <taxon>Euteleostomi</taxon>
        <taxon>Archelosauria</taxon>
        <taxon>Archosauria</taxon>
        <taxon>Dinosauria</taxon>
        <taxon>Saurischia</taxon>
        <taxon>Theropoda</taxon>
        <taxon>Coelurosauria</taxon>
        <taxon>Aves</taxon>
        <taxon>Neognathae</taxon>
        <taxon>Galloanserae</taxon>
        <taxon>Galliformes</taxon>
        <taxon>Phasianidae</taxon>
        <taxon>Phasianinae</taxon>
        <taxon>Gallus</taxon>
    </lineage>
</organism>
<sequence>MALPRLTGALRSFSNVTRHDDYSEELADLTTKRTKQQEQLLKSDLTWKKIIKFVDDNLDKKEYQTVNGDLKTILQAAKQIVGAENGQEAIESGAVFLFKTFHRKECVGHDETKAIKQMFGPFPSSSATAACNATCRIASHFTEEQLTALIQMAEEQNGDNRVFFGKNIVFSFDMHDLDHSEELPVNGEADAQRIISLDYKKFLNNQLDHLKNCCDEKSDLKSLGKVDDSFLWSEVGKYLNESQGGTPGGPTTEDLCCTLYEMLASPKSGDELQNELFELLGPEGFELIEKLLQNRSVIVERSLTCQNDNKFQTLQEQCKKFIGENAKPNYGCQVTIQSEQEKLLMKQYRREEKRNARREKQAGEDGEVSGEGLLCFDPKELRLQRELALLNARSVPILGRQREVDLERIHYPHVYDSRAEAMKTSAFIGGAKVFLPESVQRENNKMYEEVKIPHSEPMPIGIEEKIVYIKDLDEIGQLAFKGMKRLNRIQSIVFETAYNTNENMLICAPTGAGKTNIAMLTVLHEIRQHVQHGVIKKDEFKIVYVAPMKALAAEMTNYFSKRLEPLGITVKELTGDMQLSKGEILRTQMLVTTPEKWDVVTRKSVGDVALSQLVKLLILDEVHLLHEDRGPVLESIVARTLRQVESTQSMIRILGLSATLPNYLDVATFLHVNPYIGLFYFDSRFRPVPLGQTFIGIKTTNKVQQLNHMDEVCYENVLKQIMAGHQVMVFVHARNATVRTAMALREKAKNNGHICHFLSPQGSDYGQAEKQVQRSRNKQLRELFPDGFSIHHAGMLRQDRSLVENLFSNGHIKVLVCTATLAWGVNLPAHAVVIKGTQIYAAKRGSFVDLGILDVMQIFGRAGRPQFDKFGEGIIITTHDKLSHYLTLLTQQNPIESQFLESLADNLNAEIALGTVTNVEEAVKWISYTYLYVRMRANPLVYGISHKAYQMDPGLEKHREQLVIEVGRKLDKARMIRFEERTGFFSSTDLGRTASHYYIKYNTIETFNELFDAHKTEGDILAIVSKAEEFEQIKVREEEIEELDTLLNDFCELPAPGGVENNYGKINILLQTYISRGELDSFSLISDSAYVAQNAARIVRALFEIALRKRWPAMTYRLLNLSKVIDKRLWGWVSPLRQFSVLPPSVLSKLEEKNLTVDKMKDMRKDEIGHMLHHVKIGLKVKQCVHQIPSIAMEATIQPITRTVLRVRLNITPDFTWNDQVHGTVGEPWWIWVEDPTNDHIYHSEYFIIQKKQVITKEPQLLVFTIPIFEPLPSQYYIRAVSDRWLGAEAVCIINFQHLILPERHPPHTELLDLQPLPVTALGHPEYEVLYKFTHFNPIQTQIFHTLYHTDCNVLLGAPTGSGKTVAAELAIFRVFNKYPTSKAVYIAPLKALVRERIEDWKVRIEEKLGKKVVELTGDVTPDMRAIAQADLIVTTPEKWDGVSRSWQNRSYVQKVSILIIDEIHLLGDERGPVLEVIVSRTNFISSHTEKPVRVVGLSTALANARDLADWLNINQMGLFNFRPSVRPVPLEVHIQGFPGQHYCPRMARMNKPAFQAIRSHSPAKPVLIFVSSRRQTRLTSLDLIAFLATEDDPKQWLKMDEREMNDIIGTVRDSNLKLTLAFGIGMHHAGLHERDRKTVEELFVNCKIQVLIATSTLAWGVNFPAHLVIVKGTEYYDGKTRRYVDYPITDVLQMMGRAGRPQFDDQGKAVILVHDIKKDFYKKFLYEPFPVESSLLDVLADHLNAEIAAGTITSKQDAMDYITWTYFFRRLIMNPTYYNLDNVSHDTMNKYLSSLVEKSLFDLECSYCIEIGEDNRTIEPLTYGRIASYYYLKHPTIGMFKDQLKPESSVEELLLILTNADEYTDLPVRHNEDQMNSELAKHLPIEVNPHSFDSSHTKTHLLLQAHFSHAILPCPDYATDTKTVLDQAIRICQAMLDVTAHHGWLVAALNITNLVQMVVQGRWIHDSSLLTVPNIEVQHLYLFQKWSQQKRKSVHGGYQGPIECLPELMAACEGKEDVFASIVDSELQTAHISQAWNFLSRLPILNVSLSIKGCWDDPAQPQNEVPVPCLTADTRDNKRWIKLHADQEYVLQIHLQRTQMGYQGKQDSKAVAPRFPKVKDEGWFLILGEVDKKELIALKRTGYVRNRNTVSVAFYTPETPGKCIYTLYLMSDSYLGMDQQYDIYLNIIPTSTSAQATTEVSDAMSYLTLK</sequence>
<proteinExistence type="inferred from homology"/>
<reference key="1">
    <citation type="journal article" date="2004" name="Nature">
        <title>Sequence and comparative analysis of the chicken genome provide unique perspectives on vertebrate evolution.</title>
        <authorList>
            <person name="Hillier L.W."/>
            <person name="Miller W."/>
            <person name="Birney E."/>
            <person name="Warren W."/>
            <person name="Hardison R.C."/>
            <person name="Ponting C.P."/>
            <person name="Bork P."/>
            <person name="Burt D.W."/>
            <person name="Groenen M.A.M."/>
            <person name="Delany M.E."/>
            <person name="Dodgson J.B."/>
            <person name="Chinwalla A.T."/>
            <person name="Cliften P.F."/>
            <person name="Clifton S.W."/>
            <person name="Delehaunty K.D."/>
            <person name="Fronick C."/>
            <person name="Fulton R.S."/>
            <person name="Graves T.A."/>
            <person name="Kremitzki C."/>
            <person name="Layman D."/>
            <person name="Magrini V."/>
            <person name="McPherson J.D."/>
            <person name="Miner T.L."/>
            <person name="Minx P."/>
            <person name="Nash W.E."/>
            <person name="Nhan M.N."/>
            <person name="Nelson J.O."/>
            <person name="Oddy L.G."/>
            <person name="Pohl C.S."/>
            <person name="Randall-Maher J."/>
            <person name="Smith S.M."/>
            <person name="Wallis J.W."/>
            <person name="Yang S.-P."/>
            <person name="Romanov M.N."/>
            <person name="Rondelli C.M."/>
            <person name="Paton B."/>
            <person name="Smith J."/>
            <person name="Morrice D."/>
            <person name="Daniels L."/>
            <person name="Tempest H.G."/>
            <person name="Robertson L."/>
            <person name="Masabanda J.S."/>
            <person name="Griffin D.K."/>
            <person name="Vignal A."/>
            <person name="Fillon V."/>
            <person name="Jacobbson L."/>
            <person name="Kerje S."/>
            <person name="Andersson L."/>
            <person name="Crooijmans R.P."/>
            <person name="Aerts J."/>
            <person name="van der Poel J.J."/>
            <person name="Ellegren H."/>
            <person name="Caldwell R.B."/>
            <person name="Hubbard S.J."/>
            <person name="Grafham D.V."/>
            <person name="Kierzek A.M."/>
            <person name="McLaren S.R."/>
            <person name="Overton I.M."/>
            <person name="Arakawa H."/>
            <person name="Beattie K.J."/>
            <person name="Bezzubov Y."/>
            <person name="Boardman P.E."/>
            <person name="Bonfield J.K."/>
            <person name="Croning M.D.R."/>
            <person name="Davies R.M."/>
            <person name="Francis M.D."/>
            <person name="Humphray S.J."/>
            <person name="Scott C.E."/>
            <person name="Taylor R.G."/>
            <person name="Tickle C."/>
            <person name="Brown W.R.A."/>
            <person name="Rogers J."/>
            <person name="Buerstedde J.-M."/>
            <person name="Wilson S.A."/>
            <person name="Stubbs L."/>
            <person name="Ovcharenko I."/>
            <person name="Gordon L."/>
            <person name="Lucas S."/>
            <person name="Miller M.M."/>
            <person name="Inoko H."/>
            <person name="Shiina T."/>
            <person name="Kaufman J."/>
            <person name="Salomonsen J."/>
            <person name="Skjoedt K."/>
            <person name="Wong G.K.-S."/>
            <person name="Wang J."/>
            <person name="Liu B."/>
            <person name="Wang J."/>
            <person name="Yu J."/>
            <person name="Yang H."/>
            <person name="Nefedov M."/>
            <person name="Koriabine M."/>
            <person name="Dejong P.J."/>
            <person name="Goodstadt L."/>
            <person name="Webber C."/>
            <person name="Dickens N.J."/>
            <person name="Letunic I."/>
            <person name="Suyama M."/>
            <person name="Torrents D."/>
            <person name="von Mering C."/>
            <person name="Zdobnov E.M."/>
            <person name="Makova K."/>
            <person name="Nekrutenko A."/>
            <person name="Elnitski L."/>
            <person name="Eswara P."/>
            <person name="King D.C."/>
            <person name="Yang S.-P."/>
            <person name="Tyekucheva S."/>
            <person name="Radakrishnan A."/>
            <person name="Harris R.S."/>
            <person name="Chiaromonte F."/>
            <person name="Taylor J."/>
            <person name="He J."/>
            <person name="Rijnkels M."/>
            <person name="Griffiths-Jones S."/>
            <person name="Ureta-Vidal A."/>
            <person name="Hoffman M.M."/>
            <person name="Severin J."/>
            <person name="Searle S.M.J."/>
            <person name="Law A.S."/>
            <person name="Speed D."/>
            <person name="Waddington D."/>
            <person name="Cheng Z."/>
            <person name="Tuzun E."/>
            <person name="Eichler E."/>
            <person name="Bao Z."/>
            <person name="Flicek P."/>
            <person name="Shteynberg D.D."/>
            <person name="Brent M.R."/>
            <person name="Bye J.M."/>
            <person name="Huckle E.J."/>
            <person name="Chatterji S."/>
            <person name="Dewey C."/>
            <person name="Pachter L."/>
            <person name="Kouranov A."/>
            <person name="Mourelatos Z."/>
            <person name="Hatzigeorgiou A.G."/>
            <person name="Paterson A.H."/>
            <person name="Ivarie R."/>
            <person name="Brandstrom M."/>
            <person name="Axelsson E."/>
            <person name="Backstrom N."/>
            <person name="Berlin S."/>
            <person name="Webster M.T."/>
            <person name="Pourquie O."/>
            <person name="Reymond A."/>
            <person name="Ucla C."/>
            <person name="Antonarakis S.E."/>
            <person name="Long M."/>
            <person name="Emerson J.J."/>
            <person name="Betran E."/>
            <person name="Dupanloup I."/>
            <person name="Kaessmann H."/>
            <person name="Hinrichs A.S."/>
            <person name="Bejerano G."/>
            <person name="Furey T.S."/>
            <person name="Harte R.A."/>
            <person name="Raney B."/>
            <person name="Siepel A."/>
            <person name="Kent W.J."/>
            <person name="Haussler D."/>
            <person name="Eyras E."/>
            <person name="Castelo R."/>
            <person name="Abril J.F."/>
            <person name="Castellano S."/>
            <person name="Camara F."/>
            <person name="Parra G."/>
            <person name="Guigo R."/>
            <person name="Bourque G."/>
            <person name="Tesler G."/>
            <person name="Pevzner P.A."/>
            <person name="Smit A."/>
            <person name="Fulton L.A."/>
            <person name="Mardis E.R."/>
            <person name="Wilson R.K."/>
        </authorList>
    </citation>
    <scope>NUCLEOTIDE SEQUENCE [LARGE SCALE GENOMIC DNA]</scope>
    <source>
        <strain>Red jungle fowl</strain>
    </source>
</reference>
<dbReference type="EC" id="5.6.2.4" evidence="1"/>
<dbReference type="EMBL" id="AADN02002229">
    <property type="status" value="NOT_ANNOTATED_CDS"/>
    <property type="molecule type" value="Genomic_DNA"/>
</dbReference>
<dbReference type="EMBL" id="AADN02002230">
    <property type="status" value="NOT_ANNOTATED_CDS"/>
    <property type="molecule type" value="Genomic_DNA"/>
</dbReference>
<dbReference type="EMBL" id="AADN02002231">
    <property type="status" value="NOT_ANNOTATED_CDS"/>
    <property type="molecule type" value="Genomic_DNA"/>
</dbReference>
<dbReference type="EMBL" id="AADN02002232">
    <property type="status" value="NOT_ANNOTATED_CDS"/>
    <property type="molecule type" value="Genomic_DNA"/>
</dbReference>
<dbReference type="EMBL" id="AADN02002233">
    <property type="status" value="NOT_ANNOTATED_CDS"/>
    <property type="molecule type" value="Genomic_DNA"/>
</dbReference>
<dbReference type="EMBL" id="AADN02002234">
    <property type="status" value="NOT_ANNOTATED_CDS"/>
    <property type="molecule type" value="Genomic_DNA"/>
</dbReference>
<dbReference type="RefSeq" id="NP_001292140.1">
    <property type="nucleotide sequence ID" value="NM_001305211.1"/>
</dbReference>
<dbReference type="SMR" id="F1NTD6"/>
<dbReference type="FunCoup" id="F1NTD6">
    <property type="interactions" value="1786"/>
</dbReference>
<dbReference type="STRING" id="9031.ENSGALP00000024889"/>
<dbReference type="GlyGen" id="F1NTD6">
    <property type="glycosylation" value="2 sites"/>
</dbReference>
<dbReference type="PaxDb" id="9031-ENSGALP00000024889"/>
<dbReference type="Ensembl" id="ENSGALT00010036482.1">
    <property type="protein sequence ID" value="ENSGALP00010021237.1"/>
    <property type="gene ID" value="ENSGALG00010015140.1"/>
</dbReference>
<dbReference type="GeneID" id="421790"/>
<dbReference type="KEGG" id="gga:421790"/>
<dbReference type="CTD" id="10973"/>
<dbReference type="VEuPathDB" id="HostDB:geneid_421790"/>
<dbReference type="eggNOG" id="KOG0952">
    <property type="taxonomic scope" value="Eukaryota"/>
</dbReference>
<dbReference type="GeneTree" id="ENSGT00940000155377"/>
<dbReference type="HOGENOM" id="CLU_000335_2_1_1"/>
<dbReference type="InParanoid" id="F1NTD6"/>
<dbReference type="OMA" id="MCSATEF"/>
<dbReference type="OrthoDB" id="5575at2759"/>
<dbReference type="PRO" id="PR:F1NTD6"/>
<dbReference type="Proteomes" id="UP000000539">
    <property type="component" value="Chromosome 3"/>
</dbReference>
<dbReference type="Bgee" id="ENSGALG00000015465">
    <property type="expression patterns" value="Expressed in kidney and 13 other cell types or tissues"/>
</dbReference>
<dbReference type="GO" id="GO:0005829">
    <property type="term" value="C:cytosol"/>
    <property type="evidence" value="ECO:0000250"/>
    <property type="project" value="UniProtKB"/>
</dbReference>
<dbReference type="GO" id="GO:0022626">
    <property type="term" value="C:cytosolic ribosome"/>
    <property type="evidence" value="ECO:0007669"/>
    <property type="project" value="Ensembl"/>
</dbReference>
<dbReference type="GO" id="GO:1990391">
    <property type="term" value="C:DNA repair complex"/>
    <property type="evidence" value="ECO:0007669"/>
    <property type="project" value="Ensembl"/>
</dbReference>
<dbReference type="GO" id="GO:0016607">
    <property type="term" value="C:nuclear speck"/>
    <property type="evidence" value="ECO:0007669"/>
    <property type="project" value="UniProtKB-SubCell"/>
</dbReference>
<dbReference type="GO" id="GO:0005634">
    <property type="term" value="C:nucleus"/>
    <property type="evidence" value="ECO:0000250"/>
    <property type="project" value="UniProtKB"/>
</dbReference>
<dbReference type="GO" id="GO:0180022">
    <property type="term" value="C:RQC-trigger complex"/>
    <property type="evidence" value="ECO:0007669"/>
    <property type="project" value="Ensembl"/>
</dbReference>
<dbReference type="GO" id="GO:0043138">
    <property type="term" value="F:3'-5' DNA helicase activity"/>
    <property type="evidence" value="ECO:0000250"/>
    <property type="project" value="UniProtKB"/>
</dbReference>
<dbReference type="GO" id="GO:0005524">
    <property type="term" value="F:ATP binding"/>
    <property type="evidence" value="ECO:0007669"/>
    <property type="project" value="UniProtKB-KW"/>
</dbReference>
<dbReference type="GO" id="GO:0016887">
    <property type="term" value="F:ATP hydrolysis activity"/>
    <property type="evidence" value="ECO:0000250"/>
    <property type="project" value="UniProtKB"/>
</dbReference>
<dbReference type="GO" id="GO:0003676">
    <property type="term" value="F:nucleic acid binding"/>
    <property type="evidence" value="ECO:0007669"/>
    <property type="project" value="InterPro"/>
</dbReference>
<dbReference type="GO" id="GO:0006307">
    <property type="term" value="P:DNA alkylation repair"/>
    <property type="evidence" value="ECO:0000250"/>
    <property type="project" value="UniProtKB"/>
</dbReference>
<dbReference type="GO" id="GO:0072344">
    <property type="term" value="P:rescue of stalled ribosome"/>
    <property type="evidence" value="ECO:0000250"/>
    <property type="project" value="UniProtKB"/>
</dbReference>
<dbReference type="GO" id="GO:0032790">
    <property type="term" value="P:ribosome disassembly"/>
    <property type="evidence" value="ECO:0000250"/>
    <property type="project" value="UniProtKB"/>
</dbReference>
<dbReference type="GO" id="GO:1990116">
    <property type="term" value="P:ribosome-associated ubiquitin-dependent protein catabolic process"/>
    <property type="evidence" value="ECO:0000250"/>
    <property type="project" value="UniProtKB"/>
</dbReference>
<dbReference type="CDD" id="cd18020">
    <property type="entry name" value="DEXHc_ASCC3_1"/>
    <property type="match status" value="1"/>
</dbReference>
<dbReference type="CDD" id="cd18022">
    <property type="entry name" value="DEXHc_ASCC3_2"/>
    <property type="match status" value="1"/>
</dbReference>
<dbReference type="CDD" id="cd18795">
    <property type="entry name" value="SF2_C_Ski2"/>
    <property type="match status" value="2"/>
</dbReference>
<dbReference type="FunFam" id="3.40.50.300:FF:000198">
    <property type="entry name" value="Activating signal cointegrator 1 complex subunit"/>
    <property type="match status" value="1"/>
</dbReference>
<dbReference type="FunFam" id="1.10.3380.10:FF:000002">
    <property type="entry name" value="Activating signal cointegrator 1 complex subunit 3"/>
    <property type="match status" value="1"/>
</dbReference>
<dbReference type="FunFam" id="3.40.50.300:FF:000231">
    <property type="entry name" value="Activating signal cointegrator 1 complex subunit 3"/>
    <property type="match status" value="1"/>
</dbReference>
<dbReference type="FunFam" id="1.10.150.20:FF:000028">
    <property type="entry name" value="activating signal cointegrator 1 complex subunit 3"/>
    <property type="match status" value="1"/>
</dbReference>
<dbReference type="FunFam" id="2.60.40.150:FF:000113">
    <property type="entry name" value="activating signal cointegrator 1 complex subunit 3"/>
    <property type="match status" value="1"/>
</dbReference>
<dbReference type="FunFam" id="2.60.40.150:FF:000004">
    <property type="entry name" value="RNA helicase, activating signal cointegrator 1"/>
    <property type="match status" value="1"/>
</dbReference>
<dbReference type="FunFam" id="3.40.50.300:FF:000102">
    <property type="entry name" value="RNA helicase, activating signal cointegrator 1"/>
    <property type="match status" value="1"/>
</dbReference>
<dbReference type="FunFam" id="1.10.10.10:FF:000012">
    <property type="entry name" value="U5 small nuclear ribonucleoprotein helicase"/>
    <property type="match status" value="1"/>
</dbReference>
<dbReference type="FunFam" id="1.10.10.10:FF:000024">
    <property type="entry name" value="U5 small nuclear ribonucleoprotein helicase"/>
    <property type="match status" value="1"/>
</dbReference>
<dbReference type="FunFam" id="1.10.3380.10:FF:000001">
    <property type="entry name" value="U5 small nuclear ribonucleoprotein helicase"/>
    <property type="match status" value="1"/>
</dbReference>
<dbReference type="FunFam" id="3.40.50.300:FF:000062">
    <property type="entry name" value="U5 small nuclear ribonucleoprotein helicase"/>
    <property type="match status" value="1"/>
</dbReference>
<dbReference type="Gene3D" id="1.10.150.20">
    <property type="entry name" value="5' to 3' exonuclease, C-terminal subdomain"/>
    <property type="match status" value="1"/>
</dbReference>
<dbReference type="Gene3D" id="2.60.40.150">
    <property type="entry name" value="C2 domain"/>
    <property type="match status" value="2"/>
</dbReference>
<dbReference type="Gene3D" id="3.40.50.300">
    <property type="entry name" value="P-loop containing nucleotide triphosphate hydrolases"/>
    <property type="match status" value="4"/>
</dbReference>
<dbReference type="Gene3D" id="1.10.3380.10">
    <property type="entry name" value="Sec63 N-terminal domain-like domain"/>
    <property type="match status" value="2"/>
</dbReference>
<dbReference type="Gene3D" id="1.10.10.10">
    <property type="entry name" value="Winged helix-like DNA-binding domain superfamily/Winged helix DNA-binding domain"/>
    <property type="match status" value="2"/>
</dbReference>
<dbReference type="InterPro" id="IPR003593">
    <property type="entry name" value="AAA+_ATPase"/>
</dbReference>
<dbReference type="InterPro" id="IPR035892">
    <property type="entry name" value="C2_domain_sf"/>
</dbReference>
<dbReference type="InterPro" id="IPR011545">
    <property type="entry name" value="DEAD/DEAH_box_helicase_dom"/>
</dbReference>
<dbReference type="InterPro" id="IPR050474">
    <property type="entry name" value="Hel308_SKI2-like"/>
</dbReference>
<dbReference type="InterPro" id="IPR014001">
    <property type="entry name" value="Helicase_ATP-bd"/>
</dbReference>
<dbReference type="InterPro" id="IPR001650">
    <property type="entry name" value="Helicase_C-like"/>
</dbReference>
<dbReference type="InterPro" id="IPR014756">
    <property type="entry name" value="Ig_E-set"/>
</dbReference>
<dbReference type="InterPro" id="IPR027417">
    <property type="entry name" value="P-loop_NTPase"/>
</dbReference>
<dbReference type="InterPro" id="IPR004179">
    <property type="entry name" value="Sec63-dom"/>
</dbReference>
<dbReference type="InterPro" id="IPR036388">
    <property type="entry name" value="WH-like_DNA-bd_sf"/>
</dbReference>
<dbReference type="InterPro" id="IPR036390">
    <property type="entry name" value="WH_DNA-bd_sf"/>
</dbReference>
<dbReference type="PANTHER" id="PTHR47961:SF13">
    <property type="entry name" value="ACTIVATING SIGNAL COINTEGRATOR 1 COMPLEX SUBUNIT 3"/>
    <property type="match status" value="1"/>
</dbReference>
<dbReference type="PANTHER" id="PTHR47961">
    <property type="entry name" value="DNA POLYMERASE THETA, PUTATIVE (AFU_ORTHOLOGUE AFUA_1G05260)-RELATED"/>
    <property type="match status" value="1"/>
</dbReference>
<dbReference type="Pfam" id="PF00270">
    <property type="entry name" value="DEAD"/>
    <property type="match status" value="2"/>
</dbReference>
<dbReference type="Pfam" id="PF00271">
    <property type="entry name" value="Helicase_C"/>
    <property type="match status" value="2"/>
</dbReference>
<dbReference type="Pfam" id="PF02889">
    <property type="entry name" value="Sec63"/>
    <property type="match status" value="2"/>
</dbReference>
<dbReference type="Pfam" id="PF23445">
    <property type="entry name" value="SNRNP200_wHTH"/>
    <property type="match status" value="2"/>
</dbReference>
<dbReference type="PIRSF" id="PIRSF039073">
    <property type="entry name" value="BRR2"/>
    <property type="match status" value="1"/>
</dbReference>
<dbReference type="SMART" id="SM00382">
    <property type="entry name" value="AAA"/>
    <property type="match status" value="2"/>
</dbReference>
<dbReference type="SMART" id="SM00487">
    <property type="entry name" value="DEXDc"/>
    <property type="match status" value="2"/>
</dbReference>
<dbReference type="SMART" id="SM00490">
    <property type="entry name" value="HELICc"/>
    <property type="match status" value="2"/>
</dbReference>
<dbReference type="SMART" id="SM00973">
    <property type="entry name" value="Sec63"/>
    <property type="match status" value="2"/>
</dbReference>
<dbReference type="SUPFAM" id="SSF81296">
    <property type="entry name" value="E set domains"/>
    <property type="match status" value="1"/>
</dbReference>
<dbReference type="SUPFAM" id="SSF52540">
    <property type="entry name" value="P-loop containing nucleoside triphosphate hydrolases"/>
    <property type="match status" value="4"/>
</dbReference>
<dbReference type="SUPFAM" id="SSF158702">
    <property type="entry name" value="Sec63 N-terminal domain-like"/>
    <property type="match status" value="2"/>
</dbReference>
<dbReference type="SUPFAM" id="SSF46785">
    <property type="entry name" value="Winged helix' DNA-binding domain"/>
    <property type="match status" value="2"/>
</dbReference>
<dbReference type="PROSITE" id="PS51192">
    <property type="entry name" value="HELICASE_ATP_BIND_1"/>
    <property type="match status" value="2"/>
</dbReference>
<dbReference type="PROSITE" id="PS51194">
    <property type="entry name" value="HELICASE_CTER"/>
    <property type="match status" value="2"/>
</dbReference>
<evidence type="ECO:0000250" key="1">
    <source>
        <dbReference type="UniProtKB" id="Q8N3C0"/>
    </source>
</evidence>
<evidence type="ECO:0000255" key="2">
    <source>
        <dbReference type="PROSITE-ProRule" id="PRU00541"/>
    </source>
</evidence>
<evidence type="ECO:0000255" key="3">
    <source>
        <dbReference type="PROSITE-ProRule" id="PRU00542"/>
    </source>
</evidence>
<evidence type="ECO:0000305" key="4"/>